<dbReference type="EMBL" id="CH473948">
    <property type="protein sequence ID" value="EDM05376.1"/>
    <property type="molecule type" value="Genomic_DNA"/>
</dbReference>
<dbReference type="EMBL" id="BC167116">
    <property type="protein sequence ID" value="AAI67116.1"/>
    <property type="molecule type" value="mRNA"/>
</dbReference>
<dbReference type="RefSeq" id="NP_001166942.1">
    <property type="nucleotide sequence ID" value="NM_001173471.1"/>
</dbReference>
<dbReference type="SMR" id="B2RZD7"/>
<dbReference type="FunCoup" id="B2RZD7">
    <property type="interactions" value="194"/>
</dbReference>
<dbReference type="STRING" id="10116.ENSRNOP00000053037"/>
<dbReference type="iPTMnet" id="B2RZD7"/>
<dbReference type="PhosphoSitePlus" id="B2RZD7"/>
<dbReference type="PaxDb" id="10116-ENSRNOP00000053037"/>
<dbReference type="PeptideAtlas" id="B2RZD7"/>
<dbReference type="Ensembl" id="ENSRNOT00000056192.4">
    <property type="protein sequence ID" value="ENSRNOP00000053037.2"/>
    <property type="gene ID" value="ENSRNOG00000037204.4"/>
</dbReference>
<dbReference type="GeneID" id="497962"/>
<dbReference type="KEGG" id="rno:497962"/>
<dbReference type="AGR" id="RGD:1562012"/>
<dbReference type="CTD" id="201229"/>
<dbReference type="RGD" id="1562012">
    <property type="gene designation" value="Lyrm9"/>
</dbReference>
<dbReference type="eggNOG" id="ENOG502S9QI">
    <property type="taxonomic scope" value="Eukaryota"/>
</dbReference>
<dbReference type="GeneTree" id="ENSGT00390000002625"/>
<dbReference type="HOGENOM" id="CLU_183410_0_0_1"/>
<dbReference type="InParanoid" id="B2RZD7"/>
<dbReference type="OMA" id="HYKHHVR"/>
<dbReference type="PhylomeDB" id="B2RZD7"/>
<dbReference type="TreeFam" id="TF335914"/>
<dbReference type="PRO" id="PR:B2RZD7"/>
<dbReference type="Proteomes" id="UP000002494">
    <property type="component" value="Chromosome 10"/>
</dbReference>
<dbReference type="Proteomes" id="UP000234681">
    <property type="component" value="Chromosome 10"/>
</dbReference>
<dbReference type="Bgee" id="ENSRNOG00000037204">
    <property type="expression patterns" value="Expressed in pancreas and 20 other cell types or tissues"/>
</dbReference>
<dbReference type="CDD" id="cd20269">
    <property type="entry name" value="Complex1_LYR_LYRM9"/>
    <property type="match status" value="1"/>
</dbReference>
<dbReference type="InterPro" id="IPR008011">
    <property type="entry name" value="Complex1_LYR_dom"/>
</dbReference>
<dbReference type="InterPro" id="IPR045291">
    <property type="entry name" value="Complex1_LYR_LYRM9"/>
</dbReference>
<dbReference type="InterPro" id="IPR052151">
    <property type="entry name" value="Complex_I_LYR"/>
</dbReference>
<dbReference type="PANTHER" id="PTHR47061">
    <property type="entry name" value="LYR MOTIF-CONTAINING PROTEIN 9"/>
    <property type="match status" value="1"/>
</dbReference>
<dbReference type="PANTHER" id="PTHR47061:SF1">
    <property type="entry name" value="LYR MOTIF-CONTAINING PROTEIN 9"/>
    <property type="match status" value="1"/>
</dbReference>
<dbReference type="Pfam" id="PF05347">
    <property type="entry name" value="Complex1_LYR"/>
    <property type="match status" value="1"/>
</dbReference>
<gene>
    <name type="primary">Lyrm9</name>
</gene>
<feature type="chain" id="PRO_0000365118" description="LYR motif-containing protein 9">
    <location>
        <begin position="1"/>
        <end position="78"/>
    </location>
</feature>
<reference key="1">
    <citation type="submission" date="2005-07" db="EMBL/GenBank/DDBJ databases">
        <authorList>
            <person name="Mural R.J."/>
            <person name="Adams M.D."/>
            <person name="Myers E.W."/>
            <person name="Smith H.O."/>
            <person name="Venter J.C."/>
        </authorList>
    </citation>
    <scope>NUCLEOTIDE SEQUENCE [LARGE SCALE GENOMIC DNA]</scope>
</reference>
<reference key="2">
    <citation type="journal article" date="2004" name="Genome Res.">
        <title>The status, quality, and expansion of the NIH full-length cDNA project: the Mammalian Gene Collection (MGC).</title>
        <authorList>
            <consortium name="The MGC Project Team"/>
        </authorList>
    </citation>
    <scope>NUCLEOTIDE SEQUENCE [LARGE SCALE MRNA]</scope>
    <source>
        <tissue>Pituitary</tissue>
    </source>
</reference>
<sequence>MAPLRGAELVQTPLQLYRYLLRCCRQLPTKGIQEHYKHAVRQSFQVHSDEDNPERIQQIIRRAIEDADWIMNKYKKQN</sequence>
<accession>B2RZD7</accession>
<comment type="similarity">
    <text evidence="1">Belongs to the complex I LYR family. LYRM9 subfamily.</text>
</comment>
<proteinExistence type="inferred from homology"/>
<organism>
    <name type="scientific">Rattus norvegicus</name>
    <name type="common">Rat</name>
    <dbReference type="NCBI Taxonomy" id="10116"/>
    <lineage>
        <taxon>Eukaryota</taxon>
        <taxon>Metazoa</taxon>
        <taxon>Chordata</taxon>
        <taxon>Craniata</taxon>
        <taxon>Vertebrata</taxon>
        <taxon>Euteleostomi</taxon>
        <taxon>Mammalia</taxon>
        <taxon>Eutheria</taxon>
        <taxon>Euarchontoglires</taxon>
        <taxon>Glires</taxon>
        <taxon>Rodentia</taxon>
        <taxon>Myomorpha</taxon>
        <taxon>Muroidea</taxon>
        <taxon>Muridae</taxon>
        <taxon>Murinae</taxon>
        <taxon>Rattus</taxon>
    </lineage>
</organism>
<evidence type="ECO:0000305" key="1"/>
<protein>
    <recommendedName>
        <fullName>LYR motif-containing protein 9</fullName>
    </recommendedName>
</protein>
<name>LYRM9_RAT</name>
<keyword id="KW-1185">Reference proteome</keyword>